<name>FOLD2_ARATH</name>
<feature type="chain" id="PRO_0000424345" description="Bifunctional protein FolD 2">
    <location>
        <begin position="1"/>
        <end position="299"/>
    </location>
</feature>
<feature type="sequence conflict" description="In Ref. 6; AAM62762." evidence="2" ref="6">
    <original>H</original>
    <variation>N</variation>
    <location>
        <position position="115"/>
    </location>
</feature>
<proteinExistence type="evidence at transcript level"/>
<dbReference type="EC" id="1.5.1.5"/>
<dbReference type="EC" id="3.5.4.9"/>
<dbReference type="EMBL" id="AP002047">
    <property type="protein sequence ID" value="BAB03138.1"/>
    <property type="molecule type" value="Genomic_DNA"/>
</dbReference>
<dbReference type="EMBL" id="AC069472">
    <property type="protein sequence ID" value="AAG51064.1"/>
    <property type="molecule type" value="Genomic_DNA"/>
</dbReference>
<dbReference type="EMBL" id="CP002686">
    <property type="protein sequence ID" value="AEE75181.1"/>
    <property type="molecule type" value="Genomic_DNA"/>
</dbReference>
<dbReference type="EMBL" id="BT004612">
    <property type="protein sequence ID" value="AAO42858.1"/>
    <property type="molecule type" value="mRNA"/>
</dbReference>
<dbReference type="EMBL" id="AK227542">
    <property type="protein sequence ID" value="BAE99540.1"/>
    <property type="molecule type" value="mRNA"/>
</dbReference>
<dbReference type="EMBL" id="AY085538">
    <property type="protein sequence ID" value="AAM62762.1"/>
    <property type="molecule type" value="mRNA"/>
</dbReference>
<dbReference type="RefSeq" id="NP_187837.1">
    <property type="nucleotide sequence ID" value="NM_112065.3"/>
</dbReference>
<dbReference type="SMR" id="Q9LHH7"/>
<dbReference type="BioGRID" id="5743">
    <property type="interactions" value="17"/>
</dbReference>
<dbReference type="FunCoup" id="Q9LHH7">
    <property type="interactions" value="1824"/>
</dbReference>
<dbReference type="STRING" id="3702.Q9LHH7"/>
<dbReference type="iPTMnet" id="Q9LHH7"/>
<dbReference type="PaxDb" id="3702-AT3G12290.1"/>
<dbReference type="ProteomicsDB" id="230016"/>
<dbReference type="EnsemblPlants" id="AT3G12290.1">
    <property type="protein sequence ID" value="AT3G12290.1"/>
    <property type="gene ID" value="AT3G12290"/>
</dbReference>
<dbReference type="GeneID" id="820409"/>
<dbReference type="Gramene" id="AT3G12290.1">
    <property type="protein sequence ID" value="AT3G12290.1"/>
    <property type="gene ID" value="AT3G12290"/>
</dbReference>
<dbReference type="KEGG" id="ath:AT3G12290"/>
<dbReference type="Araport" id="AT3G12290"/>
<dbReference type="TAIR" id="AT3G12290">
    <property type="gene designation" value="MTHFD1"/>
</dbReference>
<dbReference type="eggNOG" id="KOG0089">
    <property type="taxonomic scope" value="Eukaryota"/>
</dbReference>
<dbReference type="HOGENOM" id="CLU_034045_1_2_1"/>
<dbReference type="InParanoid" id="Q9LHH7"/>
<dbReference type="OMA" id="VCHILTK"/>
<dbReference type="PhylomeDB" id="Q9LHH7"/>
<dbReference type="BioCyc" id="ARA:AT3G12290-MONOMER"/>
<dbReference type="UniPathway" id="UPA00193"/>
<dbReference type="CD-CODE" id="4299E36E">
    <property type="entry name" value="Nucleolus"/>
</dbReference>
<dbReference type="PRO" id="PR:Q9LHH7"/>
<dbReference type="Proteomes" id="UP000006548">
    <property type="component" value="Chromosome 3"/>
</dbReference>
<dbReference type="ExpressionAtlas" id="Q9LHH7">
    <property type="expression patterns" value="baseline and differential"/>
</dbReference>
<dbReference type="GO" id="GO:0009507">
    <property type="term" value="C:chloroplast"/>
    <property type="evidence" value="ECO:0007005"/>
    <property type="project" value="TAIR"/>
</dbReference>
<dbReference type="GO" id="GO:0005737">
    <property type="term" value="C:cytoplasm"/>
    <property type="evidence" value="ECO:0000314"/>
    <property type="project" value="TAIR"/>
</dbReference>
<dbReference type="GO" id="GO:0005829">
    <property type="term" value="C:cytosol"/>
    <property type="evidence" value="ECO:0007005"/>
    <property type="project" value="TAIR"/>
</dbReference>
<dbReference type="GO" id="GO:0004477">
    <property type="term" value="F:methenyltetrahydrofolate cyclohydrolase activity"/>
    <property type="evidence" value="ECO:0007669"/>
    <property type="project" value="UniProtKB-EC"/>
</dbReference>
<dbReference type="GO" id="GO:0004488">
    <property type="term" value="F:methylenetetrahydrofolate dehydrogenase (NADP+) activity"/>
    <property type="evidence" value="ECO:0007669"/>
    <property type="project" value="UniProtKB-EC"/>
</dbReference>
<dbReference type="GO" id="GO:0009853">
    <property type="term" value="P:photorespiration"/>
    <property type="evidence" value="ECO:0007669"/>
    <property type="project" value="UniProtKB-KW"/>
</dbReference>
<dbReference type="GO" id="GO:0035999">
    <property type="term" value="P:tetrahydrofolate interconversion"/>
    <property type="evidence" value="ECO:0007669"/>
    <property type="project" value="UniProtKB-UniPathway"/>
</dbReference>
<dbReference type="GO" id="GO:0046653">
    <property type="term" value="P:tetrahydrofolate metabolic process"/>
    <property type="evidence" value="ECO:0000315"/>
    <property type="project" value="TAIR"/>
</dbReference>
<dbReference type="CDD" id="cd01080">
    <property type="entry name" value="NAD_bind_m-THF_DH_Cyclohyd"/>
    <property type="match status" value="1"/>
</dbReference>
<dbReference type="FunFam" id="3.40.50.10860:FF:000001">
    <property type="entry name" value="Bifunctional protein FolD"/>
    <property type="match status" value="1"/>
</dbReference>
<dbReference type="FunFam" id="3.40.50.720:FF:000006">
    <property type="entry name" value="Bifunctional protein FolD"/>
    <property type="match status" value="1"/>
</dbReference>
<dbReference type="Gene3D" id="3.40.50.10860">
    <property type="entry name" value="Leucine Dehydrogenase, chain A, domain 1"/>
    <property type="match status" value="1"/>
</dbReference>
<dbReference type="Gene3D" id="3.40.50.720">
    <property type="entry name" value="NAD(P)-binding Rossmann-like Domain"/>
    <property type="match status" value="1"/>
</dbReference>
<dbReference type="HAMAP" id="MF_01576">
    <property type="entry name" value="THF_DHG_CYH"/>
    <property type="match status" value="1"/>
</dbReference>
<dbReference type="InterPro" id="IPR046346">
    <property type="entry name" value="Aminoacid_DH-like_N_sf"/>
</dbReference>
<dbReference type="InterPro" id="IPR036291">
    <property type="entry name" value="NAD(P)-bd_dom_sf"/>
</dbReference>
<dbReference type="InterPro" id="IPR000672">
    <property type="entry name" value="THF_DH/CycHdrlase"/>
</dbReference>
<dbReference type="InterPro" id="IPR020630">
    <property type="entry name" value="THF_DH/CycHdrlase_cat_dom"/>
</dbReference>
<dbReference type="InterPro" id="IPR020867">
    <property type="entry name" value="THF_DH/CycHdrlase_CS"/>
</dbReference>
<dbReference type="InterPro" id="IPR020631">
    <property type="entry name" value="THF_DH/CycHdrlase_NAD-bd_dom"/>
</dbReference>
<dbReference type="NCBIfam" id="NF008058">
    <property type="entry name" value="PRK10792.1"/>
    <property type="match status" value="1"/>
</dbReference>
<dbReference type="NCBIfam" id="NF010783">
    <property type="entry name" value="PRK14186.1"/>
    <property type="match status" value="1"/>
</dbReference>
<dbReference type="PANTHER" id="PTHR48099:SF27">
    <property type="entry name" value="BIFUNCTIONAL PROTEIN FOLD 2"/>
    <property type="match status" value="1"/>
</dbReference>
<dbReference type="PANTHER" id="PTHR48099">
    <property type="entry name" value="C-1-TETRAHYDROFOLATE SYNTHASE, CYTOPLASMIC-RELATED"/>
    <property type="match status" value="1"/>
</dbReference>
<dbReference type="Pfam" id="PF00763">
    <property type="entry name" value="THF_DHG_CYH"/>
    <property type="match status" value="1"/>
</dbReference>
<dbReference type="Pfam" id="PF02882">
    <property type="entry name" value="THF_DHG_CYH_C"/>
    <property type="match status" value="1"/>
</dbReference>
<dbReference type="PRINTS" id="PR00085">
    <property type="entry name" value="THFDHDRGNASE"/>
</dbReference>
<dbReference type="SUPFAM" id="SSF53223">
    <property type="entry name" value="Aminoacid dehydrogenase-like, N-terminal domain"/>
    <property type="match status" value="1"/>
</dbReference>
<dbReference type="SUPFAM" id="SSF51735">
    <property type="entry name" value="NAD(P)-binding Rossmann-fold domains"/>
    <property type="match status" value="1"/>
</dbReference>
<dbReference type="PROSITE" id="PS00766">
    <property type="entry name" value="THF_DHG_CYH_1"/>
    <property type="match status" value="1"/>
</dbReference>
<dbReference type="PROSITE" id="PS00767">
    <property type="entry name" value="THF_DHG_CYH_2"/>
    <property type="match status" value="1"/>
</dbReference>
<accession>Q9LHH7</accession>
<accession>Q8LEA3</accession>
<gene>
    <name type="primary">FOLD2</name>
    <name type="synonym">DHC2</name>
    <name type="ordered locus">At3g12290</name>
    <name type="ORF">F28J15.8</name>
</gene>
<comment type="function">
    <text evidence="1">Catalyzes the oxidation of 5,10-methylenetetrahydrofolate to 5,10-methenyltetrahydrofolate and then the hydrolysis of 5,10-methenyltetrahydrofolate to 10-formyltetrahydrofolate.</text>
</comment>
<comment type="catalytic activity">
    <reaction>
        <text>(6R)-5,10-methylene-5,6,7,8-tetrahydrofolate + NADP(+) = (6R)-5,10-methenyltetrahydrofolate + NADPH</text>
        <dbReference type="Rhea" id="RHEA:22812"/>
        <dbReference type="ChEBI" id="CHEBI:15636"/>
        <dbReference type="ChEBI" id="CHEBI:57455"/>
        <dbReference type="ChEBI" id="CHEBI:57783"/>
        <dbReference type="ChEBI" id="CHEBI:58349"/>
        <dbReference type="EC" id="1.5.1.5"/>
    </reaction>
</comment>
<comment type="catalytic activity">
    <reaction>
        <text>(6R)-5,10-methenyltetrahydrofolate + H2O = (6R)-10-formyltetrahydrofolate + H(+)</text>
        <dbReference type="Rhea" id="RHEA:23700"/>
        <dbReference type="ChEBI" id="CHEBI:15377"/>
        <dbReference type="ChEBI" id="CHEBI:15378"/>
        <dbReference type="ChEBI" id="CHEBI:57455"/>
        <dbReference type="ChEBI" id="CHEBI:195366"/>
        <dbReference type="EC" id="3.5.4.9"/>
    </reaction>
</comment>
<comment type="pathway">
    <text>One-carbon metabolism; tetrahydrofolate interconversion.</text>
</comment>
<comment type="subunit">
    <text evidence="1">Homodimer.</text>
</comment>
<comment type="similarity">
    <text evidence="2">Belongs to the tetrahydrofolate dehydrogenase/cyclohydrolase family.</text>
</comment>
<organism>
    <name type="scientific">Arabidopsis thaliana</name>
    <name type="common">Mouse-ear cress</name>
    <dbReference type="NCBI Taxonomy" id="3702"/>
    <lineage>
        <taxon>Eukaryota</taxon>
        <taxon>Viridiplantae</taxon>
        <taxon>Streptophyta</taxon>
        <taxon>Embryophyta</taxon>
        <taxon>Tracheophyta</taxon>
        <taxon>Spermatophyta</taxon>
        <taxon>Magnoliopsida</taxon>
        <taxon>eudicotyledons</taxon>
        <taxon>Gunneridae</taxon>
        <taxon>Pentapetalae</taxon>
        <taxon>rosids</taxon>
        <taxon>malvids</taxon>
        <taxon>Brassicales</taxon>
        <taxon>Brassicaceae</taxon>
        <taxon>Camelineae</taxon>
        <taxon>Arabidopsis</taxon>
    </lineage>
</organism>
<sequence>MASSSDHTAKIIDGKAIAHTIRSEIAEEVRGLSEKHGKVPGLAVVIVGSRKDSQTYVNTKRKACAEVGIKSFDVGLPEEVSEADLISKVHELNSNPDVHGILVQLPLPKHINEEHILGAISIDKDVDGFHPLNIGKLAMKGREPLFLPCTPKGCLELLARSGVKIKGQRAVVVGRSNIVGLPVSLLLLKADATVTTVHSHTKDPEAIIREADIVIAACGQAHMIKGNWIKPGAAVIDVGTNAVSDPSKKSGYRLVGDVDFAEASKVAGFITPVPGGVGPMTVAMLLRNTVDGAKRVFGE</sequence>
<keyword id="KW-0378">Hydrolase</keyword>
<keyword id="KW-0511">Multifunctional enzyme</keyword>
<keyword id="KW-0521">NADP</keyword>
<keyword id="KW-0554">One-carbon metabolism</keyword>
<keyword id="KW-0560">Oxidoreductase</keyword>
<keyword id="KW-0601">Photorespiration</keyword>
<keyword id="KW-1185">Reference proteome</keyword>
<protein>
    <recommendedName>
        <fullName>Bifunctional protein FolD 2</fullName>
    </recommendedName>
    <alternativeName>
        <fullName>Tetrahydrofolate dehydrogenase/cyclohydrolase 2</fullName>
    </alternativeName>
    <domain>
        <recommendedName>
            <fullName>Methylenetetrahydrofolate dehydrogenase</fullName>
            <ecNumber>1.5.1.5</ecNumber>
        </recommendedName>
    </domain>
    <domain>
        <recommendedName>
            <fullName>Methenyltetrahydrofolate cyclohydrolase</fullName>
            <ecNumber>3.5.4.9</ecNumber>
        </recommendedName>
    </domain>
</protein>
<reference key="1">
    <citation type="journal article" date="2000" name="DNA Res.">
        <title>Structural analysis of Arabidopsis thaliana chromosome 3. II. Sequence features of the 4,251,695 bp regions covered by 90 P1, TAC and BAC clones.</title>
        <authorList>
            <person name="Kaneko T."/>
            <person name="Katoh T."/>
            <person name="Sato S."/>
            <person name="Nakamura Y."/>
            <person name="Asamizu E."/>
            <person name="Tabata S."/>
        </authorList>
    </citation>
    <scope>NUCLEOTIDE SEQUENCE [LARGE SCALE GENOMIC DNA]</scope>
    <source>
        <strain>cv. Columbia</strain>
    </source>
</reference>
<reference key="2">
    <citation type="journal article" date="2000" name="Nature">
        <title>Sequence and analysis of chromosome 3 of the plant Arabidopsis thaliana.</title>
        <authorList>
            <person name="Salanoubat M."/>
            <person name="Lemcke K."/>
            <person name="Rieger M."/>
            <person name="Ansorge W."/>
            <person name="Unseld M."/>
            <person name="Fartmann B."/>
            <person name="Valle G."/>
            <person name="Bloecker H."/>
            <person name="Perez-Alonso M."/>
            <person name="Obermaier B."/>
            <person name="Delseny M."/>
            <person name="Boutry M."/>
            <person name="Grivell L.A."/>
            <person name="Mache R."/>
            <person name="Puigdomenech P."/>
            <person name="De Simone V."/>
            <person name="Choisne N."/>
            <person name="Artiguenave F."/>
            <person name="Robert C."/>
            <person name="Brottier P."/>
            <person name="Wincker P."/>
            <person name="Cattolico L."/>
            <person name="Weissenbach J."/>
            <person name="Saurin W."/>
            <person name="Quetier F."/>
            <person name="Schaefer M."/>
            <person name="Mueller-Auer S."/>
            <person name="Gabel C."/>
            <person name="Fuchs M."/>
            <person name="Benes V."/>
            <person name="Wurmbach E."/>
            <person name="Drzonek H."/>
            <person name="Erfle H."/>
            <person name="Jordan N."/>
            <person name="Bangert S."/>
            <person name="Wiedelmann R."/>
            <person name="Kranz H."/>
            <person name="Voss H."/>
            <person name="Holland R."/>
            <person name="Brandt P."/>
            <person name="Nyakatura G."/>
            <person name="Vezzi A."/>
            <person name="D'Angelo M."/>
            <person name="Pallavicini A."/>
            <person name="Toppo S."/>
            <person name="Simionati B."/>
            <person name="Conrad A."/>
            <person name="Hornischer K."/>
            <person name="Kauer G."/>
            <person name="Loehnert T.-H."/>
            <person name="Nordsiek G."/>
            <person name="Reichelt J."/>
            <person name="Scharfe M."/>
            <person name="Schoen O."/>
            <person name="Bargues M."/>
            <person name="Terol J."/>
            <person name="Climent J."/>
            <person name="Navarro P."/>
            <person name="Collado C."/>
            <person name="Perez-Perez A."/>
            <person name="Ottenwaelder B."/>
            <person name="Duchemin D."/>
            <person name="Cooke R."/>
            <person name="Laudie M."/>
            <person name="Berger-Llauro C."/>
            <person name="Purnelle B."/>
            <person name="Masuy D."/>
            <person name="de Haan M."/>
            <person name="Maarse A.C."/>
            <person name="Alcaraz J.-P."/>
            <person name="Cottet A."/>
            <person name="Casacuberta E."/>
            <person name="Monfort A."/>
            <person name="Argiriou A."/>
            <person name="Flores M."/>
            <person name="Liguori R."/>
            <person name="Vitale D."/>
            <person name="Mannhaupt G."/>
            <person name="Haase D."/>
            <person name="Schoof H."/>
            <person name="Rudd S."/>
            <person name="Zaccaria P."/>
            <person name="Mewes H.-W."/>
            <person name="Mayer K.F.X."/>
            <person name="Kaul S."/>
            <person name="Town C.D."/>
            <person name="Koo H.L."/>
            <person name="Tallon L.J."/>
            <person name="Jenkins J."/>
            <person name="Rooney T."/>
            <person name="Rizzo M."/>
            <person name="Walts A."/>
            <person name="Utterback T."/>
            <person name="Fujii C.Y."/>
            <person name="Shea T.P."/>
            <person name="Creasy T.H."/>
            <person name="Haas B."/>
            <person name="Maiti R."/>
            <person name="Wu D."/>
            <person name="Peterson J."/>
            <person name="Van Aken S."/>
            <person name="Pai G."/>
            <person name="Militscher J."/>
            <person name="Sellers P."/>
            <person name="Gill J.E."/>
            <person name="Feldblyum T.V."/>
            <person name="Preuss D."/>
            <person name="Lin X."/>
            <person name="Nierman W.C."/>
            <person name="Salzberg S.L."/>
            <person name="White O."/>
            <person name="Venter J.C."/>
            <person name="Fraser C.M."/>
            <person name="Kaneko T."/>
            <person name="Nakamura Y."/>
            <person name="Sato S."/>
            <person name="Kato T."/>
            <person name="Asamizu E."/>
            <person name="Sasamoto S."/>
            <person name="Kimura T."/>
            <person name="Idesawa K."/>
            <person name="Kawashima K."/>
            <person name="Kishida Y."/>
            <person name="Kiyokawa C."/>
            <person name="Kohara M."/>
            <person name="Matsumoto M."/>
            <person name="Matsuno A."/>
            <person name="Muraki A."/>
            <person name="Nakayama S."/>
            <person name="Nakazaki N."/>
            <person name="Shinpo S."/>
            <person name="Takeuchi C."/>
            <person name="Wada T."/>
            <person name="Watanabe A."/>
            <person name="Yamada M."/>
            <person name="Yasuda M."/>
            <person name="Tabata S."/>
        </authorList>
    </citation>
    <scope>NUCLEOTIDE SEQUENCE [LARGE SCALE GENOMIC DNA]</scope>
    <source>
        <strain>cv. Columbia</strain>
    </source>
</reference>
<reference key="3">
    <citation type="journal article" date="2017" name="Plant J.">
        <title>Araport11: a complete reannotation of the Arabidopsis thaliana reference genome.</title>
        <authorList>
            <person name="Cheng C.Y."/>
            <person name="Krishnakumar V."/>
            <person name="Chan A.P."/>
            <person name="Thibaud-Nissen F."/>
            <person name="Schobel S."/>
            <person name="Town C.D."/>
        </authorList>
    </citation>
    <scope>GENOME REANNOTATION</scope>
    <source>
        <strain>cv. Columbia</strain>
    </source>
</reference>
<reference key="4">
    <citation type="journal article" date="2003" name="Science">
        <title>Empirical analysis of transcriptional activity in the Arabidopsis genome.</title>
        <authorList>
            <person name="Yamada K."/>
            <person name="Lim J."/>
            <person name="Dale J.M."/>
            <person name="Chen H."/>
            <person name="Shinn P."/>
            <person name="Palm C.J."/>
            <person name="Southwick A.M."/>
            <person name="Wu H.C."/>
            <person name="Kim C.J."/>
            <person name="Nguyen M."/>
            <person name="Pham P.K."/>
            <person name="Cheuk R.F."/>
            <person name="Karlin-Newmann G."/>
            <person name="Liu S.X."/>
            <person name="Lam B."/>
            <person name="Sakano H."/>
            <person name="Wu T."/>
            <person name="Yu G."/>
            <person name="Miranda M."/>
            <person name="Quach H.L."/>
            <person name="Tripp M."/>
            <person name="Chang C.H."/>
            <person name="Lee J.M."/>
            <person name="Toriumi M.J."/>
            <person name="Chan M.M."/>
            <person name="Tang C.C."/>
            <person name="Onodera C.S."/>
            <person name="Deng J.M."/>
            <person name="Akiyama K."/>
            <person name="Ansari Y."/>
            <person name="Arakawa T."/>
            <person name="Banh J."/>
            <person name="Banno F."/>
            <person name="Bowser L."/>
            <person name="Brooks S.Y."/>
            <person name="Carninci P."/>
            <person name="Chao Q."/>
            <person name="Choy N."/>
            <person name="Enju A."/>
            <person name="Goldsmith A.D."/>
            <person name="Gurjal M."/>
            <person name="Hansen N.F."/>
            <person name="Hayashizaki Y."/>
            <person name="Johnson-Hopson C."/>
            <person name="Hsuan V.W."/>
            <person name="Iida K."/>
            <person name="Karnes M."/>
            <person name="Khan S."/>
            <person name="Koesema E."/>
            <person name="Ishida J."/>
            <person name="Jiang P.X."/>
            <person name="Jones T."/>
            <person name="Kawai J."/>
            <person name="Kamiya A."/>
            <person name="Meyers C."/>
            <person name="Nakajima M."/>
            <person name="Narusaka M."/>
            <person name="Seki M."/>
            <person name="Sakurai T."/>
            <person name="Satou M."/>
            <person name="Tamse R."/>
            <person name="Vaysberg M."/>
            <person name="Wallender E.K."/>
            <person name="Wong C."/>
            <person name="Yamamura Y."/>
            <person name="Yuan S."/>
            <person name="Shinozaki K."/>
            <person name="Davis R.W."/>
            <person name="Theologis A."/>
            <person name="Ecker J.R."/>
        </authorList>
    </citation>
    <scope>NUCLEOTIDE SEQUENCE [LARGE SCALE MRNA]</scope>
    <source>
        <strain>cv. Columbia</strain>
    </source>
</reference>
<reference key="5">
    <citation type="submission" date="2006-07" db="EMBL/GenBank/DDBJ databases">
        <title>Large-scale analysis of RIKEN Arabidopsis full-length (RAFL) cDNAs.</title>
        <authorList>
            <person name="Totoki Y."/>
            <person name="Seki M."/>
            <person name="Ishida J."/>
            <person name="Nakajima M."/>
            <person name="Enju A."/>
            <person name="Kamiya A."/>
            <person name="Narusaka M."/>
            <person name="Shin-i T."/>
            <person name="Nakagawa M."/>
            <person name="Sakamoto N."/>
            <person name="Oishi K."/>
            <person name="Kohara Y."/>
            <person name="Kobayashi M."/>
            <person name="Toyoda A."/>
            <person name="Sakaki Y."/>
            <person name="Sakurai T."/>
            <person name="Iida K."/>
            <person name="Akiyama K."/>
            <person name="Satou M."/>
            <person name="Toyoda T."/>
            <person name="Konagaya A."/>
            <person name="Carninci P."/>
            <person name="Kawai J."/>
            <person name="Hayashizaki Y."/>
            <person name="Shinozaki K."/>
        </authorList>
    </citation>
    <scope>NUCLEOTIDE SEQUENCE [LARGE SCALE MRNA]</scope>
    <source>
        <strain>cv. Columbia</strain>
    </source>
</reference>
<reference key="6">
    <citation type="submission" date="2002-03" db="EMBL/GenBank/DDBJ databases">
        <title>Full-length cDNA from Arabidopsis thaliana.</title>
        <authorList>
            <person name="Brover V.V."/>
            <person name="Troukhan M.E."/>
            <person name="Alexandrov N.A."/>
            <person name="Lu Y.-P."/>
            <person name="Flavell R.B."/>
            <person name="Feldmann K.A."/>
        </authorList>
    </citation>
    <scope>NUCLEOTIDE SEQUENCE [LARGE SCALE MRNA]</scope>
</reference>
<evidence type="ECO:0000250" key="1"/>
<evidence type="ECO:0000305" key="2"/>